<keyword id="KW-1185">Reference proteome</keyword>
<evidence type="ECO:0000305" key="1"/>
<protein>
    <recommendedName>
        <fullName>Ubiquitin-like protein FUBI</fullName>
    </recommendedName>
</protein>
<gene>
    <name type="primary">FAU</name>
</gene>
<organism>
    <name type="scientific">Bos taurus</name>
    <name type="common">Bovine</name>
    <dbReference type="NCBI Taxonomy" id="9913"/>
    <lineage>
        <taxon>Eukaryota</taxon>
        <taxon>Metazoa</taxon>
        <taxon>Chordata</taxon>
        <taxon>Craniata</taxon>
        <taxon>Vertebrata</taxon>
        <taxon>Euteleostomi</taxon>
        <taxon>Mammalia</taxon>
        <taxon>Eutheria</taxon>
        <taxon>Laurasiatheria</taxon>
        <taxon>Artiodactyla</taxon>
        <taxon>Ruminantia</taxon>
        <taxon>Pecora</taxon>
        <taxon>Bovidae</taxon>
        <taxon>Bovinae</taxon>
        <taxon>Bos</taxon>
    </lineage>
</organism>
<proteinExistence type="inferred from homology"/>
<dbReference type="EMBL" id="AF520959">
    <property type="protein sequence ID" value="AAN77126.1"/>
    <property type="status" value="ALT_TERM"/>
    <property type="molecule type" value="mRNA"/>
</dbReference>
<dbReference type="RefSeq" id="NP_777156.1">
    <property type="nucleotide sequence ID" value="NM_174731.4"/>
</dbReference>
<dbReference type="SMR" id="P62865"/>
<dbReference type="FunCoup" id="P62865">
    <property type="interactions" value="66"/>
</dbReference>
<dbReference type="MINT" id="P62865"/>
<dbReference type="STRING" id="9913.ENSBTAP00000027728"/>
<dbReference type="PaxDb" id="9913-ENSBTAP00000042482"/>
<dbReference type="GeneID" id="282847"/>
<dbReference type="KEGG" id="bta:282847"/>
<dbReference type="CTD" id="2197"/>
<dbReference type="eggNOG" id="KOG0001">
    <property type="taxonomic scope" value="Eukaryota"/>
</dbReference>
<dbReference type="eggNOG" id="KOG0009">
    <property type="taxonomic scope" value="Eukaryota"/>
</dbReference>
<dbReference type="InParanoid" id="P62865"/>
<dbReference type="OrthoDB" id="199599at2759"/>
<dbReference type="Proteomes" id="UP000009136">
    <property type="component" value="Unplaced"/>
</dbReference>
<dbReference type="CDD" id="cd01793">
    <property type="entry name" value="Ubl_FUBI"/>
    <property type="match status" value="1"/>
</dbReference>
<dbReference type="FunFam" id="3.10.20.90:FF:000114">
    <property type="entry name" value="40S ribosomal protein S30"/>
    <property type="match status" value="1"/>
</dbReference>
<dbReference type="Gene3D" id="3.10.20.90">
    <property type="entry name" value="Phosphatidylinositol 3-kinase Catalytic Subunit, Chain A, domain 1"/>
    <property type="match status" value="1"/>
</dbReference>
<dbReference type="InterPro" id="IPR039415">
    <property type="entry name" value="FUBI"/>
</dbReference>
<dbReference type="InterPro" id="IPR000626">
    <property type="entry name" value="Ubiquitin-like_dom"/>
</dbReference>
<dbReference type="InterPro" id="IPR029071">
    <property type="entry name" value="Ubiquitin-like_domsf"/>
</dbReference>
<dbReference type="InterPro" id="IPR019954">
    <property type="entry name" value="Ubiquitin_CS"/>
</dbReference>
<dbReference type="InterPro" id="IPR019956">
    <property type="entry name" value="Ubiquitin_dom"/>
</dbReference>
<dbReference type="Pfam" id="PF00240">
    <property type="entry name" value="ubiquitin"/>
    <property type="match status" value="1"/>
</dbReference>
<dbReference type="PRINTS" id="PR00348">
    <property type="entry name" value="UBIQUITIN"/>
</dbReference>
<dbReference type="SMART" id="SM00213">
    <property type="entry name" value="UBQ"/>
    <property type="match status" value="1"/>
</dbReference>
<dbReference type="SUPFAM" id="SSF54236">
    <property type="entry name" value="Ubiquitin-like"/>
    <property type="match status" value="1"/>
</dbReference>
<dbReference type="PROSITE" id="PS00299">
    <property type="entry name" value="UBIQUITIN_1"/>
    <property type="match status" value="1"/>
</dbReference>
<dbReference type="PROSITE" id="PS50053">
    <property type="entry name" value="UBIQUITIN_2"/>
    <property type="match status" value="1"/>
</dbReference>
<feature type="chain" id="PRO_0000114880" description="Ubiquitin-like protein FUBI">
    <location>
        <begin position="1"/>
        <end position="74"/>
    </location>
</feature>
<sequence length="74" mass="7756">MQLFVRAQELHTLEVTGQETVAQIKAHVASLEGIAPEDQVLLLAGTPLEDEATLGQCGVEALSTLEVAGRMLGG</sequence>
<reference key="1">
    <citation type="submission" date="2002-06" db="EMBL/GenBank/DDBJ databases">
        <title>Nucleotide sequence of bovine ubiquitin-like/S30 ribosomal fusion protein cDNA in adipose tissues of Korean cattle.</title>
        <authorList>
            <person name="Baik M."/>
            <person name="Bong J."/>
            <person name="Kong T."/>
        </authorList>
    </citation>
    <scope>NUCLEOTIDE SEQUENCE [MRNA]</scope>
    <source>
        <strain>Korean</strain>
    </source>
</reference>
<name>UBIM_BOVIN</name>
<comment type="miscellaneous">
    <text>This protein is synthesized with ribosomal S30 as its C-terminal extension.</text>
</comment>
<comment type="similarity">
    <text evidence="1">Belongs to the ubiquitin family.</text>
</comment>
<accession>P62865</accession>
<accession>Q8HYI8</accession>